<comment type="function">
    <text evidence="1">Required for correct translation termination and probably involved in regulation of hypoxic gene expression.</text>
</comment>
<comment type="subcellular location">
    <subcellularLocation>
        <location evidence="1">Nucleus</location>
    </subcellularLocation>
</comment>
<comment type="similarity">
    <text evidence="3">Belongs to the ETT1 family.</text>
</comment>
<reference key="1">
    <citation type="journal article" date="2007" name="Nat. Biotechnol.">
        <title>Genome sequence of the lignocellulose-bioconverting and xylose-fermenting yeast Pichia stipitis.</title>
        <authorList>
            <person name="Jeffries T.W."/>
            <person name="Grigoriev I.V."/>
            <person name="Grimwood J."/>
            <person name="Laplaza J.M."/>
            <person name="Aerts A."/>
            <person name="Salamov A."/>
            <person name="Schmutz J."/>
            <person name="Lindquist E."/>
            <person name="Dehal P."/>
            <person name="Shapiro H."/>
            <person name="Jin Y.-S."/>
            <person name="Passoth V."/>
            <person name="Richardson P.M."/>
        </authorList>
    </citation>
    <scope>NUCLEOTIDE SEQUENCE [LARGE SCALE GENOMIC DNA]</scope>
    <source>
        <strain>ATCC 58785 / CBS 6054 / NBRC 10063 / NRRL Y-11545</strain>
    </source>
</reference>
<evidence type="ECO:0000250" key="1"/>
<evidence type="ECO:0000256" key="2">
    <source>
        <dbReference type="SAM" id="MobiDB-lite"/>
    </source>
</evidence>
<evidence type="ECO:0000305" key="3"/>
<proteinExistence type="inferred from homology"/>
<accession>A3LUM8</accession>
<protein>
    <recommendedName>
        <fullName>Enhancer of translation termination 1</fullName>
    </recommendedName>
</protein>
<sequence>MAKRSLGIGKASKAKKQKSAPREEEKIEKDQATEGSNEITVELNEEADANDEIAQLKALWKTYNDSEKDNELVINGIIHECDRLLRNSKLGEEKEKEKEQYTQELPDFFHSIYALALAELAKFHTEDNKKVAEYFDAAVERADLGLSQHQDSIQLLFSKSKILLHQIALQYISQLKVDTSISKKVPKLSSYLDSALRTYEEAEKKADELKKYELFNADQLEILQVLDDLLDIVDNFGKDIAEGEDDDDEVEDDEIELEESHPLYAIRESDEYNQWWRDHIILFLDNVDKHGKEIKVDFKEKAKSQEEEHPLLPLRREICKRIGQSYLQEAEVPSSVFTTLAYDDGFKNEKEINGLSLKESQKIAQKLISTALKYLQWAEDQEEPETWVNVAEAMISLGNLYEVESEEQESHYQEAEKILNKANNVTNGKYEDVLENLLGD</sequence>
<gene>
    <name type="primary">ETT1</name>
    <name type="ORF">PICST_58954</name>
</gene>
<organism>
    <name type="scientific">Scheffersomyces stipitis (strain ATCC 58785 / CBS 6054 / NBRC 10063 / NRRL Y-11545)</name>
    <name type="common">Yeast</name>
    <name type="synonym">Pichia stipitis</name>
    <dbReference type="NCBI Taxonomy" id="322104"/>
    <lineage>
        <taxon>Eukaryota</taxon>
        <taxon>Fungi</taxon>
        <taxon>Dikarya</taxon>
        <taxon>Ascomycota</taxon>
        <taxon>Saccharomycotina</taxon>
        <taxon>Pichiomycetes</taxon>
        <taxon>Debaryomycetaceae</taxon>
        <taxon>Scheffersomyces</taxon>
    </lineage>
</organism>
<feature type="chain" id="PRO_0000406622" description="Enhancer of translation termination 1">
    <location>
        <begin position="1"/>
        <end position="440"/>
    </location>
</feature>
<feature type="region of interest" description="Disordered" evidence="2">
    <location>
        <begin position="1"/>
        <end position="37"/>
    </location>
</feature>
<feature type="compositionally biased region" description="Basic and acidic residues" evidence="2">
    <location>
        <begin position="20"/>
        <end position="32"/>
    </location>
</feature>
<name>ETT1_PICST</name>
<keyword id="KW-0539">Nucleus</keyword>
<keyword id="KW-1185">Reference proteome</keyword>
<keyword id="KW-0804">Transcription</keyword>
<keyword id="KW-0805">Transcription regulation</keyword>
<keyword id="KW-0810">Translation regulation</keyword>
<dbReference type="EMBL" id="CP000498">
    <property type="protein sequence ID" value="ABN66264.1"/>
    <property type="molecule type" value="Genomic_DNA"/>
</dbReference>
<dbReference type="RefSeq" id="XP_001384293.1">
    <property type="nucleotide sequence ID" value="XM_001384256.1"/>
</dbReference>
<dbReference type="SMR" id="A3LUM8"/>
<dbReference type="FunCoup" id="A3LUM8">
    <property type="interactions" value="99"/>
</dbReference>
<dbReference type="STRING" id="322104.A3LUM8"/>
<dbReference type="GeneID" id="4838409"/>
<dbReference type="KEGG" id="pic:PICST_58954"/>
<dbReference type="eggNOG" id="ENOG502QPHX">
    <property type="taxonomic scope" value="Eukaryota"/>
</dbReference>
<dbReference type="HOGENOM" id="CLU_050427_0_0_1"/>
<dbReference type="InParanoid" id="A3LUM8"/>
<dbReference type="OMA" id="GIVHECD"/>
<dbReference type="OrthoDB" id="5598057at2759"/>
<dbReference type="Proteomes" id="UP000002258">
    <property type="component" value="Chromosome 4"/>
</dbReference>
<dbReference type="GO" id="GO:0005634">
    <property type="term" value="C:nucleus"/>
    <property type="evidence" value="ECO:0007669"/>
    <property type="project" value="UniProtKB-SubCell"/>
</dbReference>
<dbReference type="GO" id="GO:2000640">
    <property type="term" value="P:positive regulation of SREBP signaling pathway"/>
    <property type="evidence" value="ECO:0007669"/>
    <property type="project" value="TreeGrafter"/>
</dbReference>
<dbReference type="GO" id="GO:0006417">
    <property type="term" value="P:regulation of translation"/>
    <property type="evidence" value="ECO:0007669"/>
    <property type="project" value="UniProtKB-KW"/>
</dbReference>
<dbReference type="InterPro" id="IPR024318">
    <property type="entry name" value="Nro1/ETT1"/>
</dbReference>
<dbReference type="PANTHER" id="PTHR28290">
    <property type="entry name" value="ENHANCER OF TRANSLATION TERMINATION 1"/>
    <property type="match status" value="1"/>
</dbReference>
<dbReference type="PANTHER" id="PTHR28290:SF1">
    <property type="entry name" value="ENHANCER OF TRANSLATION TERMINATION 1"/>
    <property type="match status" value="1"/>
</dbReference>
<dbReference type="Pfam" id="PF12753">
    <property type="entry name" value="Nro1"/>
    <property type="match status" value="1"/>
</dbReference>